<feature type="signal peptide" evidence="2">
    <location>
        <begin position="1"/>
        <end position="30"/>
    </location>
</feature>
<feature type="chain" id="PRO_0000457847" description="OMEGA-ectatommitoxin(02)-Rm1b" evidence="2">
    <location>
        <begin position="31"/>
        <end position="89"/>
    </location>
</feature>
<feature type="domain" description="EGF-like" evidence="1 4">
    <location>
        <begin position="43"/>
        <end position="80"/>
    </location>
</feature>
<feature type="disulfide bond" evidence="2">
    <location>
        <begin position="39"/>
        <end position="52"/>
    </location>
</feature>
<feature type="disulfide bond" evidence="2">
    <location>
        <begin position="47"/>
        <end position="68"/>
    </location>
</feature>
<feature type="disulfide bond" evidence="2">
    <location>
        <begin position="70"/>
        <end position="79"/>
    </location>
</feature>
<accession>A0A8U0LTN3</accession>
<dbReference type="EMBL" id="MW317124">
    <property type="protein sequence ID" value="UPH34157.1"/>
    <property type="molecule type" value="mRNA"/>
</dbReference>
<dbReference type="SMR" id="A0A8U0LTN3"/>
<dbReference type="GO" id="GO:0005576">
    <property type="term" value="C:extracellular region"/>
    <property type="evidence" value="ECO:0007669"/>
    <property type="project" value="UniProtKB-SubCell"/>
</dbReference>
<dbReference type="GO" id="GO:0090729">
    <property type="term" value="F:toxin activity"/>
    <property type="evidence" value="ECO:0007669"/>
    <property type="project" value="UniProtKB-KW"/>
</dbReference>
<dbReference type="Gene3D" id="2.10.25.10">
    <property type="entry name" value="Laminin"/>
    <property type="match status" value="1"/>
</dbReference>
<dbReference type="SUPFAM" id="SSF57196">
    <property type="entry name" value="EGF/Laminin"/>
    <property type="match status" value="1"/>
</dbReference>
<dbReference type="PROSITE" id="PS00022">
    <property type="entry name" value="EGF_1"/>
    <property type="match status" value="1"/>
</dbReference>
<proteinExistence type="inferred from homology"/>
<evidence type="ECO:0000250" key="1">
    <source>
        <dbReference type="UniProtKB" id="P0DQX9"/>
    </source>
</evidence>
<evidence type="ECO:0000250" key="2">
    <source>
        <dbReference type="UniProtKB" id="P0DSL4"/>
    </source>
</evidence>
<evidence type="ECO:0000303" key="3">
    <source>
    </source>
</evidence>
<evidence type="ECO:0000305" key="4"/>
<keyword id="KW-1015">Disulfide bond</keyword>
<keyword id="KW-0245">EGF-like domain</keyword>
<keyword id="KW-0528">Neurotoxin</keyword>
<keyword id="KW-0964">Secreted</keyword>
<keyword id="KW-0732">Signal</keyword>
<keyword id="KW-0800">Toxin</keyword>
<organism>
    <name type="scientific">Rhytidoponera metallica</name>
    <name type="common">Australian green-headed ant</name>
    <name type="synonym">Ponera metallica</name>
    <dbReference type="NCBI Taxonomy" id="148364"/>
    <lineage>
        <taxon>Eukaryota</taxon>
        <taxon>Metazoa</taxon>
        <taxon>Ecdysozoa</taxon>
        <taxon>Arthropoda</taxon>
        <taxon>Hexapoda</taxon>
        <taxon>Insecta</taxon>
        <taxon>Pterygota</taxon>
        <taxon>Neoptera</taxon>
        <taxon>Endopterygota</taxon>
        <taxon>Hymenoptera</taxon>
        <taxon>Apocrita</taxon>
        <taxon>Aculeata</taxon>
        <taxon>Formicoidea</taxon>
        <taxon>Formicidae</taxon>
        <taxon>Ectatomminae</taxon>
        <taxon>Ectatommini</taxon>
        <taxon>Rhytidoponera</taxon>
    </lineage>
</organism>
<reference key="1">
    <citation type="journal article" date="2022" name="Proc. Natl. Acad. Sci. U.S.A.">
        <title>A peptide toxin in ant venom mimics vertebrate EGF-like hormones to cause long-lasting hypersensitivity in mammals.</title>
        <authorList>
            <person name="Eagles D.A."/>
            <person name="Saez N.J."/>
            <person name="Krishnarjuna B."/>
            <person name="Bradford J.J."/>
            <person name="Chin Y.K."/>
            <person name="Starobova H."/>
            <person name="Mueller A."/>
            <person name="Reichelt M.E."/>
            <person name="Undheim E.A.B."/>
            <person name="Norton R.S."/>
            <person name="Thomas W.G."/>
            <person name="Vetter I."/>
            <person name="King G.F."/>
            <person name="Robinson S.D."/>
        </authorList>
    </citation>
    <scope>NUCLEOTIDE SEQUENCE [MRNA]</scope>
    <source>
        <tissue>Venom gland</tissue>
    </source>
</reference>
<protein>
    <recommendedName>
        <fullName evidence="4">OMEGA-ectatommitoxin(02)-Rm1b</fullName>
        <shortName evidence="3">ECTX2-Rm1b</shortName>
        <shortName evidence="4">OMEGA-ECTX2-Rm1b</shortName>
    </recommendedName>
</protein>
<comment type="function">
    <text evidence="2">Ant peptide with probable defensive activity which acts as a potent agonist of the mammalian epidermal growth factor receptor (EGFR). Mimics, both structurally and functionally, vertebrate epidermal growth factor (EGF) peptide hormones. In vivo, intraplantar injection in mice causes long-lasting (several days) hypersensitivity of the injected paw to both mechanical and thermal stimuli. Its long-lasting effect is unusual for venom toxins whose effects are usually immediate. One possible explanation is that it would reduce the duration of a nest attack, discourage future attacks, or enhance the actions of subsequent exposure to other pain-inducing venom peptides.</text>
</comment>
<comment type="subcellular location">
    <subcellularLocation>
        <location evidence="2">Secreted</location>
    </subcellularLocation>
</comment>
<comment type="tissue specificity">
    <text evidence="2">Expressed by the venom gland.</text>
</comment>
<comment type="similarity">
    <text evidence="4">Belongs to the EGF domain peptide family.</text>
</comment>
<sequence>MKDSYISIVIAYLMVTFILVSSMPIEGEKGELGPHRLPCPPEYANYCFNGKCVHFVAQDEPGKPCYSCICDKFYIGKRCGTLDLTNPDF</sequence>
<name>TX21B_RHYMT</name>